<dbReference type="EMBL" id="AE008923">
    <property type="protein sequence ID" value="AAM35858.1"/>
    <property type="molecule type" value="Genomic_DNA"/>
</dbReference>
<dbReference type="RefSeq" id="WP_003486715.1">
    <property type="nucleotide sequence ID" value="NC_003919.1"/>
</dbReference>
<dbReference type="SMR" id="Q8PNS1"/>
<dbReference type="GeneID" id="97509339"/>
<dbReference type="KEGG" id="xac:XAC0975"/>
<dbReference type="eggNOG" id="COG0090">
    <property type="taxonomic scope" value="Bacteria"/>
</dbReference>
<dbReference type="HOGENOM" id="CLU_036235_2_1_6"/>
<dbReference type="Proteomes" id="UP000000576">
    <property type="component" value="Chromosome"/>
</dbReference>
<dbReference type="GO" id="GO:0015934">
    <property type="term" value="C:large ribosomal subunit"/>
    <property type="evidence" value="ECO:0007669"/>
    <property type="project" value="InterPro"/>
</dbReference>
<dbReference type="GO" id="GO:0019843">
    <property type="term" value="F:rRNA binding"/>
    <property type="evidence" value="ECO:0007669"/>
    <property type="project" value="UniProtKB-UniRule"/>
</dbReference>
<dbReference type="GO" id="GO:0003735">
    <property type="term" value="F:structural constituent of ribosome"/>
    <property type="evidence" value="ECO:0007669"/>
    <property type="project" value="InterPro"/>
</dbReference>
<dbReference type="GO" id="GO:0016740">
    <property type="term" value="F:transferase activity"/>
    <property type="evidence" value="ECO:0007669"/>
    <property type="project" value="InterPro"/>
</dbReference>
<dbReference type="GO" id="GO:0002181">
    <property type="term" value="P:cytoplasmic translation"/>
    <property type="evidence" value="ECO:0007669"/>
    <property type="project" value="TreeGrafter"/>
</dbReference>
<dbReference type="FunFam" id="2.30.30.30:FF:000001">
    <property type="entry name" value="50S ribosomal protein L2"/>
    <property type="match status" value="1"/>
</dbReference>
<dbReference type="FunFam" id="2.40.50.140:FF:000003">
    <property type="entry name" value="50S ribosomal protein L2"/>
    <property type="match status" value="1"/>
</dbReference>
<dbReference type="FunFam" id="4.10.950.10:FF:000001">
    <property type="entry name" value="50S ribosomal protein L2"/>
    <property type="match status" value="1"/>
</dbReference>
<dbReference type="Gene3D" id="2.30.30.30">
    <property type="match status" value="1"/>
</dbReference>
<dbReference type="Gene3D" id="2.40.50.140">
    <property type="entry name" value="Nucleic acid-binding proteins"/>
    <property type="match status" value="1"/>
</dbReference>
<dbReference type="Gene3D" id="4.10.950.10">
    <property type="entry name" value="Ribosomal protein L2, domain 3"/>
    <property type="match status" value="1"/>
</dbReference>
<dbReference type="HAMAP" id="MF_01320_B">
    <property type="entry name" value="Ribosomal_uL2_B"/>
    <property type="match status" value="1"/>
</dbReference>
<dbReference type="InterPro" id="IPR012340">
    <property type="entry name" value="NA-bd_OB-fold"/>
</dbReference>
<dbReference type="InterPro" id="IPR014722">
    <property type="entry name" value="Rib_uL2_dom2"/>
</dbReference>
<dbReference type="InterPro" id="IPR002171">
    <property type="entry name" value="Ribosomal_uL2"/>
</dbReference>
<dbReference type="InterPro" id="IPR005880">
    <property type="entry name" value="Ribosomal_uL2_bac/org-type"/>
</dbReference>
<dbReference type="InterPro" id="IPR022669">
    <property type="entry name" value="Ribosomal_uL2_C"/>
</dbReference>
<dbReference type="InterPro" id="IPR022671">
    <property type="entry name" value="Ribosomal_uL2_CS"/>
</dbReference>
<dbReference type="InterPro" id="IPR014726">
    <property type="entry name" value="Ribosomal_uL2_dom3"/>
</dbReference>
<dbReference type="InterPro" id="IPR022666">
    <property type="entry name" value="Ribosomal_uL2_RNA-bd_dom"/>
</dbReference>
<dbReference type="InterPro" id="IPR008991">
    <property type="entry name" value="Translation_prot_SH3-like_sf"/>
</dbReference>
<dbReference type="NCBIfam" id="TIGR01171">
    <property type="entry name" value="rplB_bact"/>
    <property type="match status" value="1"/>
</dbReference>
<dbReference type="PANTHER" id="PTHR13691:SF5">
    <property type="entry name" value="LARGE RIBOSOMAL SUBUNIT PROTEIN UL2M"/>
    <property type="match status" value="1"/>
</dbReference>
<dbReference type="PANTHER" id="PTHR13691">
    <property type="entry name" value="RIBOSOMAL PROTEIN L2"/>
    <property type="match status" value="1"/>
</dbReference>
<dbReference type="Pfam" id="PF00181">
    <property type="entry name" value="Ribosomal_L2"/>
    <property type="match status" value="1"/>
</dbReference>
<dbReference type="Pfam" id="PF03947">
    <property type="entry name" value="Ribosomal_L2_C"/>
    <property type="match status" value="1"/>
</dbReference>
<dbReference type="PIRSF" id="PIRSF002158">
    <property type="entry name" value="Ribosomal_L2"/>
    <property type="match status" value="1"/>
</dbReference>
<dbReference type="SMART" id="SM01383">
    <property type="entry name" value="Ribosomal_L2"/>
    <property type="match status" value="1"/>
</dbReference>
<dbReference type="SMART" id="SM01382">
    <property type="entry name" value="Ribosomal_L2_C"/>
    <property type="match status" value="1"/>
</dbReference>
<dbReference type="SUPFAM" id="SSF50249">
    <property type="entry name" value="Nucleic acid-binding proteins"/>
    <property type="match status" value="1"/>
</dbReference>
<dbReference type="SUPFAM" id="SSF50104">
    <property type="entry name" value="Translation proteins SH3-like domain"/>
    <property type="match status" value="1"/>
</dbReference>
<dbReference type="PROSITE" id="PS00467">
    <property type="entry name" value="RIBOSOMAL_L2"/>
    <property type="match status" value="1"/>
</dbReference>
<proteinExistence type="inferred from homology"/>
<gene>
    <name evidence="1" type="primary">rplB</name>
    <name type="ordered locus">XAC0975</name>
</gene>
<evidence type="ECO:0000255" key="1">
    <source>
        <dbReference type="HAMAP-Rule" id="MF_01320"/>
    </source>
</evidence>
<evidence type="ECO:0000256" key="2">
    <source>
        <dbReference type="SAM" id="MobiDB-lite"/>
    </source>
</evidence>
<evidence type="ECO:0000305" key="3"/>
<accession>Q8PNS1</accession>
<reference key="1">
    <citation type="journal article" date="2002" name="Nature">
        <title>Comparison of the genomes of two Xanthomonas pathogens with differing host specificities.</title>
        <authorList>
            <person name="da Silva A.C.R."/>
            <person name="Ferro J.A."/>
            <person name="Reinach F.C."/>
            <person name="Farah C.S."/>
            <person name="Furlan L.R."/>
            <person name="Quaggio R.B."/>
            <person name="Monteiro-Vitorello C.B."/>
            <person name="Van Sluys M.A."/>
            <person name="Almeida N.F. Jr."/>
            <person name="Alves L.M.C."/>
            <person name="do Amaral A.M."/>
            <person name="Bertolini M.C."/>
            <person name="Camargo L.E.A."/>
            <person name="Camarotte G."/>
            <person name="Cannavan F."/>
            <person name="Cardozo J."/>
            <person name="Chambergo F."/>
            <person name="Ciapina L.P."/>
            <person name="Cicarelli R.M.B."/>
            <person name="Coutinho L.L."/>
            <person name="Cursino-Santos J.R."/>
            <person name="El-Dorry H."/>
            <person name="Faria J.B."/>
            <person name="Ferreira A.J.S."/>
            <person name="Ferreira R.C.C."/>
            <person name="Ferro M.I.T."/>
            <person name="Formighieri E.F."/>
            <person name="Franco M.C."/>
            <person name="Greggio C.C."/>
            <person name="Gruber A."/>
            <person name="Katsuyama A.M."/>
            <person name="Kishi L.T."/>
            <person name="Leite R.P."/>
            <person name="Lemos E.G.M."/>
            <person name="Lemos M.V.F."/>
            <person name="Locali E.C."/>
            <person name="Machado M.A."/>
            <person name="Madeira A.M.B.N."/>
            <person name="Martinez-Rossi N.M."/>
            <person name="Martins E.C."/>
            <person name="Meidanis J."/>
            <person name="Menck C.F.M."/>
            <person name="Miyaki C.Y."/>
            <person name="Moon D.H."/>
            <person name="Moreira L.M."/>
            <person name="Novo M.T.M."/>
            <person name="Okura V.K."/>
            <person name="Oliveira M.C."/>
            <person name="Oliveira V.R."/>
            <person name="Pereira H.A."/>
            <person name="Rossi A."/>
            <person name="Sena J.A.D."/>
            <person name="Silva C."/>
            <person name="de Souza R.F."/>
            <person name="Spinola L.A.F."/>
            <person name="Takita M.A."/>
            <person name="Tamura R.E."/>
            <person name="Teixeira E.C."/>
            <person name="Tezza R.I.D."/>
            <person name="Trindade dos Santos M."/>
            <person name="Truffi D."/>
            <person name="Tsai S.M."/>
            <person name="White F.F."/>
            <person name="Setubal J.C."/>
            <person name="Kitajima J.P."/>
        </authorList>
    </citation>
    <scope>NUCLEOTIDE SEQUENCE [LARGE SCALE GENOMIC DNA]</scope>
    <source>
        <strain>306</strain>
    </source>
</reference>
<organism>
    <name type="scientific">Xanthomonas axonopodis pv. citri (strain 306)</name>
    <dbReference type="NCBI Taxonomy" id="190486"/>
    <lineage>
        <taxon>Bacteria</taxon>
        <taxon>Pseudomonadati</taxon>
        <taxon>Pseudomonadota</taxon>
        <taxon>Gammaproteobacteria</taxon>
        <taxon>Lysobacterales</taxon>
        <taxon>Lysobacteraceae</taxon>
        <taxon>Xanthomonas</taxon>
    </lineage>
</organism>
<sequence>MPLMKFKPTSPGRRSAVRVVTPDLHKGAPHAALLDSQSKSGGRNHHGRITVRHVGGGHKQHYRIIDFKRNKEGIPARVERIEYDPNRTAHIALLCYVDGERRYIIAPKGLKAGDQVIAGANAPIKTGNTLPLRNIPVGTTVHGIELKPGKGAQIARAAGAAVQLVAREGIYATLRLRSGEMRKVPVECRATIGEVGNDEHNLEKLGKAGAKRWRGVRPTVRGAAMNPVDHPHGGGEAKAGQGNPHPVTPWGVPTKGYKTRKNKRTQQFIVRDRRG</sequence>
<protein>
    <recommendedName>
        <fullName evidence="1">Large ribosomal subunit protein uL2</fullName>
    </recommendedName>
    <alternativeName>
        <fullName evidence="3">50S ribosomal protein L2</fullName>
    </alternativeName>
</protein>
<name>RL2_XANAC</name>
<feature type="chain" id="PRO_0000129653" description="Large ribosomal subunit protein uL2">
    <location>
        <begin position="1"/>
        <end position="275"/>
    </location>
</feature>
<feature type="region of interest" description="Disordered" evidence="2">
    <location>
        <begin position="224"/>
        <end position="275"/>
    </location>
</feature>
<comment type="function">
    <text evidence="1">One of the primary rRNA binding proteins. Required for association of the 30S and 50S subunits to form the 70S ribosome, for tRNA binding and peptide bond formation. It has been suggested to have peptidyltransferase activity; this is somewhat controversial. Makes several contacts with the 16S rRNA in the 70S ribosome.</text>
</comment>
<comment type="subunit">
    <text evidence="1">Part of the 50S ribosomal subunit. Forms a bridge to the 30S subunit in the 70S ribosome.</text>
</comment>
<comment type="similarity">
    <text evidence="1">Belongs to the universal ribosomal protein uL2 family.</text>
</comment>
<keyword id="KW-0687">Ribonucleoprotein</keyword>
<keyword id="KW-0689">Ribosomal protein</keyword>
<keyword id="KW-0694">RNA-binding</keyword>
<keyword id="KW-0699">rRNA-binding</keyword>